<organism>
    <name type="scientific">Staphylococcus aureus (strain COL)</name>
    <dbReference type="NCBI Taxonomy" id="93062"/>
    <lineage>
        <taxon>Bacteria</taxon>
        <taxon>Bacillati</taxon>
        <taxon>Bacillota</taxon>
        <taxon>Bacilli</taxon>
        <taxon>Bacillales</taxon>
        <taxon>Staphylococcaceae</taxon>
        <taxon>Staphylococcus</taxon>
    </lineage>
</organism>
<accession>Q5HGW2</accession>
<proteinExistence type="inferred from homology"/>
<protein>
    <recommendedName>
        <fullName evidence="1">UPF0298 protein SACOL1131</fullName>
    </recommendedName>
</protein>
<comment type="subcellular location">
    <subcellularLocation>
        <location evidence="1">Cytoplasm</location>
    </subcellularLocation>
</comment>
<comment type="similarity">
    <text evidence="1">Belongs to the UPF0298 family.</text>
</comment>
<evidence type="ECO:0000255" key="1">
    <source>
        <dbReference type="HAMAP-Rule" id="MF_01126"/>
    </source>
</evidence>
<reference key="1">
    <citation type="journal article" date="2005" name="J. Bacteriol.">
        <title>Insights on evolution of virulence and resistance from the complete genome analysis of an early methicillin-resistant Staphylococcus aureus strain and a biofilm-producing methicillin-resistant Staphylococcus epidermidis strain.</title>
        <authorList>
            <person name="Gill S.R."/>
            <person name="Fouts D.E."/>
            <person name="Archer G.L."/>
            <person name="Mongodin E.F."/>
            <person name="DeBoy R.T."/>
            <person name="Ravel J."/>
            <person name="Paulsen I.T."/>
            <person name="Kolonay J.F."/>
            <person name="Brinkac L.M."/>
            <person name="Beanan M.J."/>
            <person name="Dodson R.J."/>
            <person name="Daugherty S.C."/>
            <person name="Madupu R."/>
            <person name="Angiuoli S.V."/>
            <person name="Durkin A.S."/>
            <person name="Haft D.H."/>
            <person name="Vamathevan J.J."/>
            <person name="Khouri H."/>
            <person name="Utterback T.R."/>
            <person name="Lee C."/>
            <person name="Dimitrov G."/>
            <person name="Jiang L."/>
            <person name="Qin H."/>
            <person name="Weidman J."/>
            <person name="Tran K."/>
            <person name="Kang K.H."/>
            <person name="Hance I.R."/>
            <person name="Nelson K.E."/>
            <person name="Fraser C.M."/>
        </authorList>
    </citation>
    <scope>NUCLEOTIDE SEQUENCE [LARGE SCALE GENOMIC DNA]</scope>
    <source>
        <strain>COL</strain>
    </source>
</reference>
<dbReference type="EMBL" id="CP000046">
    <property type="protein sequence ID" value="AAW38011.1"/>
    <property type="molecule type" value="Genomic_DNA"/>
</dbReference>
<dbReference type="RefSeq" id="WP_001049150.1">
    <property type="nucleotide sequence ID" value="NZ_JBGOFO010000002.1"/>
</dbReference>
<dbReference type="SMR" id="Q5HGW2"/>
<dbReference type="KEGG" id="sac:SACOL1131"/>
<dbReference type="HOGENOM" id="CLU_159890_2_1_9"/>
<dbReference type="Proteomes" id="UP000000530">
    <property type="component" value="Chromosome"/>
</dbReference>
<dbReference type="GO" id="GO:0005737">
    <property type="term" value="C:cytoplasm"/>
    <property type="evidence" value="ECO:0007669"/>
    <property type="project" value="UniProtKB-SubCell"/>
</dbReference>
<dbReference type="HAMAP" id="MF_01126">
    <property type="entry name" value="UPF0298"/>
    <property type="match status" value="1"/>
</dbReference>
<dbReference type="InterPro" id="IPR016979">
    <property type="entry name" value="DUF2129"/>
</dbReference>
<dbReference type="Pfam" id="PF09902">
    <property type="entry name" value="DUF2129"/>
    <property type="match status" value="1"/>
</dbReference>
<dbReference type="PIRSF" id="PIRSF031653">
    <property type="entry name" value="UCP031653"/>
    <property type="match status" value="1"/>
</dbReference>
<feature type="chain" id="PRO_0000074665" description="UPF0298 protein SACOL1131">
    <location>
        <begin position="1"/>
        <end position="84"/>
    </location>
</feature>
<name>Y1131_STAAC</name>
<sequence>MNLIPRTSIVVYLKHMKHERQIRKYGHIVHSNRDRKFVIMYVNEQDVDQIVHKLMQLKYVRHIDGSPYKYLKKTYEKEKHEIYN</sequence>
<keyword id="KW-0963">Cytoplasm</keyword>
<gene>
    <name type="ordered locus">SACOL1131</name>
</gene>